<protein>
    <recommendedName>
        <fullName evidence="1">ATP synthase subunit alpha, chloroplastic</fullName>
        <ecNumber evidence="1">7.1.2.2</ecNumber>
    </recommendedName>
    <alternativeName>
        <fullName evidence="1">ATP synthase F1 sector subunit alpha</fullName>
    </alternativeName>
    <alternativeName>
        <fullName evidence="1">F-ATPase subunit alpha</fullName>
    </alternativeName>
</protein>
<reference key="1">
    <citation type="journal article" date="2007" name="Mol. Genet. Genomics">
        <title>Chloroplast genomes of the diatoms Phaeodactylum tricornutum and Thalassiosira pseudonana: comparison with other plastid genomes of the red lineage.</title>
        <authorList>
            <person name="Oudot-Le Secq M.-P."/>
            <person name="Grimwood J."/>
            <person name="Shapiro H."/>
            <person name="Armbrust E.V."/>
            <person name="Bowler C."/>
            <person name="Green B.R."/>
        </authorList>
    </citation>
    <scope>NUCLEOTIDE SEQUENCE [LARGE SCALE GENOMIC DNA]</scope>
    <source>
        <strain>CCAP 1055/1</strain>
    </source>
</reference>
<name>ATPA_PHATC</name>
<gene>
    <name evidence="1" type="primary">atpA</name>
</gene>
<sequence>MINIRPDEISSIIREQIEKYDQDVKVDNIGTVLQVGDGIARVYGLDQVMSGELLEFEDKTIGIALNLENDNVGVVLMGTGRQILEGSTVKATGRIAQIPVGDEFLGRVVSPLGVAIDGKGEIVTSDSRLLEAMAPGIISRKSVCEPLQTGITSIDAMIPIGRGQRELIIGDRQTGKTSIAVDTIINQQTEDVICVYVGVGQKASTIAQVVNVLEEKNAMSYTIVVASSANDPATLQYIAPYAGAALAEYFMYKGKATLIVYDDLTKQAVAYRQMSLLLRRPPGREAYPGDVFYLHSRLLERAAKLSDKLGGGSMTALPIIETQASDVSAYIPTNVISITDGQIFLSNDLFNSGIRPAINVGISVSRVGSAAQTKAMKKVAGKLKLELAQFAELEAFSQFASDLDEATQKQLARGTRLREVLKQPQNSPLSVAQQVALIYTGINGYLDDLPVSNVKSYCASLMTYLTTSKKPYTEIVRTTNQFTEEAESSLKEAILESKEAFSKTN</sequence>
<feature type="chain" id="PRO_0000275175" description="ATP synthase subunit alpha, chloroplastic">
    <location>
        <begin position="1"/>
        <end position="505"/>
    </location>
</feature>
<feature type="binding site" evidence="1">
    <location>
        <begin position="170"/>
        <end position="177"/>
    </location>
    <ligand>
        <name>ATP</name>
        <dbReference type="ChEBI" id="CHEBI:30616"/>
    </ligand>
</feature>
<feature type="site" description="Required for activity" evidence="1">
    <location>
        <position position="363"/>
    </location>
</feature>
<accession>A0T0F1</accession>
<comment type="function">
    <text evidence="1">Produces ATP from ADP in the presence of a proton gradient across the membrane. The alpha chain is a regulatory subunit.</text>
</comment>
<comment type="catalytic activity">
    <reaction evidence="1">
        <text>ATP + H2O + 4 H(+)(in) = ADP + phosphate + 5 H(+)(out)</text>
        <dbReference type="Rhea" id="RHEA:57720"/>
        <dbReference type="ChEBI" id="CHEBI:15377"/>
        <dbReference type="ChEBI" id="CHEBI:15378"/>
        <dbReference type="ChEBI" id="CHEBI:30616"/>
        <dbReference type="ChEBI" id="CHEBI:43474"/>
        <dbReference type="ChEBI" id="CHEBI:456216"/>
        <dbReference type="EC" id="7.1.2.2"/>
    </reaction>
</comment>
<comment type="subunit">
    <text evidence="1">F-type ATPases have 2 components, CF(1) - the catalytic core - and CF(0) - the membrane proton channel. CF(1) has five subunits: alpha(3), beta(3), gamma(1), delta(1), epsilon(1). CF(0) has four main subunits: a, b, b' and c.</text>
</comment>
<comment type="subcellular location">
    <subcellularLocation>
        <location evidence="1">Plastid</location>
        <location evidence="1">Chloroplast thylakoid membrane</location>
        <topology evidence="1">Peripheral membrane protein</topology>
    </subcellularLocation>
</comment>
<comment type="similarity">
    <text evidence="1">Belongs to the ATPase alpha/beta chains family.</text>
</comment>
<organism>
    <name type="scientific">Phaeodactylum tricornutum (strain CCAP 1055/1)</name>
    <dbReference type="NCBI Taxonomy" id="556484"/>
    <lineage>
        <taxon>Eukaryota</taxon>
        <taxon>Sar</taxon>
        <taxon>Stramenopiles</taxon>
        <taxon>Ochrophyta</taxon>
        <taxon>Bacillariophyta</taxon>
        <taxon>Bacillariophyceae</taxon>
        <taxon>Bacillariophycidae</taxon>
        <taxon>Naviculales</taxon>
        <taxon>Phaeodactylaceae</taxon>
        <taxon>Phaeodactylum</taxon>
    </lineage>
</organism>
<geneLocation type="chloroplast"/>
<proteinExistence type="inferred from homology"/>
<keyword id="KW-0066">ATP synthesis</keyword>
<keyword id="KW-0067">ATP-binding</keyword>
<keyword id="KW-0139">CF(1)</keyword>
<keyword id="KW-0150">Chloroplast</keyword>
<keyword id="KW-0375">Hydrogen ion transport</keyword>
<keyword id="KW-0406">Ion transport</keyword>
<keyword id="KW-0472">Membrane</keyword>
<keyword id="KW-0547">Nucleotide-binding</keyword>
<keyword id="KW-0934">Plastid</keyword>
<keyword id="KW-1185">Reference proteome</keyword>
<keyword id="KW-0793">Thylakoid</keyword>
<keyword id="KW-1278">Translocase</keyword>
<keyword id="KW-0813">Transport</keyword>
<dbReference type="EC" id="7.1.2.2" evidence="1"/>
<dbReference type="EMBL" id="EF067920">
    <property type="protein sequence ID" value="ABK20649.1"/>
    <property type="molecule type" value="Genomic_DNA"/>
</dbReference>
<dbReference type="RefSeq" id="YP_874426.1">
    <property type="nucleotide sequence ID" value="NC_008588.1"/>
</dbReference>
<dbReference type="SMR" id="A0T0F1"/>
<dbReference type="STRING" id="556484.A0T0F1"/>
<dbReference type="GeneID" id="4524631"/>
<dbReference type="InParanoid" id="A0T0F1"/>
<dbReference type="Proteomes" id="UP000000759">
    <property type="component" value="Chloroplast"/>
</dbReference>
<dbReference type="GO" id="GO:0009535">
    <property type="term" value="C:chloroplast thylakoid membrane"/>
    <property type="evidence" value="ECO:0007669"/>
    <property type="project" value="UniProtKB-SubCell"/>
</dbReference>
<dbReference type="GO" id="GO:0045259">
    <property type="term" value="C:proton-transporting ATP synthase complex"/>
    <property type="evidence" value="ECO:0007669"/>
    <property type="project" value="UniProtKB-KW"/>
</dbReference>
<dbReference type="GO" id="GO:0043531">
    <property type="term" value="F:ADP binding"/>
    <property type="evidence" value="ECO:0007669"/>
    <property type="project" value="TreeGrafter"/>
</dbReference>
<dbReference type="GO" id="GO:0005524">
    <property type="term" value="F:ATP binding"/>
    <property type="evidence" value="ECO:0007669"/>
    <property type="project" value="UniProtKB-UniRule"/>
</dbReference>
<dbReference type="GO" id="GO:0046933">
    <property type="term" value="F:proton-transporting ATP synthase activity, rotational mechanism"/>
    <property type="evidence" value="ECO:0007669"/>
    <property type="project" value="UniProtKB-UniRule"/>
</dbReference>
<dbReference type="CDD" id="cd18113">
    <property type="entry name" value="ATP-synt_F1_alpha_C"/>
    <property type="match status" value="1"/>
</dbReference>
<dbReference type="CDD" id="cd18116">
    <property type="entry name" value="ATP-synt_F1_alpha_N"/>
    <property type="match status" value="1"/>
</dbReference>
<dbReference type="CDD" id="cd01132">
    <property type="entry name" value="F1-ATPase_alpha_CD"/>
    <property type="match status" value="1"/>
</dbReference>
<dbReference type="FunFam" id="1.20.150.20:FF:000001">
    <property type="entry name" value="ATP synthase subunit alpha"/>
    <property type="match status" value="1"/>
</dbReference>
<dbReference type="FunFam" id="2.40.30.20:FF:000001">
    <property type="entry name" value="ATP synthase subunit alpha"/>
    <property type="match status" value="1"/>
</dbReference>
<dbReference type="FunFam" id="3.40.50.300:FF:000002">
    <property type="entry name" value="ATP synthase subunit alpha"/>
    <property type="match status" value="1"/>
</dbReference>
<dbReference type="Gene3D" id="2.40.30.20">
    <property type="match status" value="1"/>
</dbReference>
<dbReference type="Gene3D" id="1.20.150.20">
    <property type="entry name" value="ATP synthase alpha/beta chain, C-terminal domain"/>
    <property type="match status" value="1"/>
</dbReference>
<dbReference type="Gene3D" id="3.40.50.300">
    <property type="entry name" value="P-loop containing nucleotide triphosphate hydrolases"/>
    <property type="match status" value="1"/>
</dbReference>
<dbReference type="HAMAP" id="MF_01346">
    <property type="entry name" value="ATP_synth_alpha_bact"/>
    <property type="match status" value="1"/>
</dbReference>
<dbReference type="InterPro" id="IPR023366">
    <property type="entry name" value="ATP_synth_asu-like_sf"/>
</dbReference>
<dbReference type="InterPro" id="IPR000793">
    <property type="entry name" value="ATP_synth_asu_C"/>
</dbReference>
<dbReference type="InterPro" id="IPR038376">
    <property type="entry name" value="ATP_synth_asu_C_sf"/>
</dbReference>
<dbReference type="InterPro" id="IPR033732">
    <property type="entry name" value="ATP_synth_F1_a_nt-bd_dom"/>
</dbReference>
<dbReference type="InterPro" id="IPR005294">
    <property type="entry name" value="ATP_synth_F1_asu"/>
</dbReference>
<dbReference type="InterPro" id="IPR020003">
    <property type="entry name" value="ATPase_a/bsu_AS"/>
</dbReference>
<dbReference type="InterPro" id="IPR004100">
    <property type="entry name" value="ATPase_F1/V1/A1_a/bsu_N"/>
</dbReference>
<dbReference type="InterPro" id="IPR036121">
    <property type="entry name" value="ATPase_F1/V1/A1_a/bsu_N_sf"/>
</dbReference>
<dbReference type="InterPro" id="IPR000194">
    <property type="entry name" value="ATPase_F1/V1/A1_a/bsu_nucl-bd"/>
</dbReference>
<dbReference type="InterPro" id="IPR027417">
    <property type="entry name" value="P-loop_NTPase"/>
</dbReference>
<dbReference type="NCBIfam" id="TIGR00962">
    <property type="entry name" value="atpA"/>
    <property type="match status" value="1"/>
</dbReference>
<dbReference type="NCBIfam" id="NF009884">
    <property type="entry name" value="PRK13343.1"/>
    <property type="match status" value="1"/>
</dbReference>
<dbReference type="PANTHER" id="PTHR48082">
    <property type="entry name" value="ATP SYNTHASE SUBUNIT ALPHA, MITOCHONDRIAL"/>
    <property type="match status" value="1"/>
</dbReference>
<dbReference type="PANTHER" id="PTHR48082:SF2">
    <property type="entry name" value="ATP SYNTHASE SUBUNIT ALPHA, MITOCHONDRIAL"/>
    <property type="match status" value="1"/>
</dbReference>
<dbReference type="Pfam" id="PF00006">
    <property type="entry name" value="ATP-synt_ab"/>
    <property type="match status" value="1"/>
</dbReference>
<dbReference type="Pfam" id="PF00306">
    <property type="entry name" value="ATP-synt_ab_C"/>
    <property type="match status" value="1"/>
</dbReference>
<dbReference type="Pfam" id="PF02874">
    <property type="entry name" value="ATP-synt_ab_N"/>
    <property type="match status" value="1"/>
</dbReference>
<dbReference type="PIRSF" id="PIRSF039088">
    <property type="entry name" value="F_ATPase_subunit_alpha"/>
    <property type="match status" value="1"/>
</dbReference>
<dbReference type="SUPFAM" id="SSF47917">
    <property type="entry name" value="C-terminal domain of alpha and beta subunits of F1 ATP synthase"/>
    <property type="match status" value="1"/>
</dbReference>
<dbReference type="SUPFAM" id="SSF50615">
    <property type="entry name" value="N-terminal domain of alpha and beta subunits of F1 ATP synthase"/>
    <property type="match status" value="1"/>
</dbReference>
<dbReference type="SUPFAM" id="SSF52540">
    <property type="entry name" value="P-loop containing nucleoside triphosphate hydrolases"/>
    <property type="match status" value="1"/>
</dbReference>
<dbReference type="PROSITE" id="PS00152">
    <property type="entry name" value="ATPASE_ALPHA_BETA"/>
    <property type="match status" value="1"/>
</dbReference>
<evidence type="ECO:0000255" key="1">
    <source>
        <dbReference type="HAMAP-Rule" id="MF_01346"/>
    </source>
</evidence>